<keyword id="KW-0106">Calcium</keyword>
<keyword id="KW-0176">Collagen</keyword>
<keyword id="KW-1018">Complement activation lectin pathway</keyword>
<keyword id="KW-1015">Disulfide bond</keyword>
<keyword id="KW-0325">Glycoprotein</keyword>
<keyword id="KW-0391">Immunity</keyword>
<keyword id="KW-0399">Innate immunity</keyword>
<keyword id="KW-0430">Lectin</keyword>
<keyword id="KW-0479">Metal-binding</keyword>
<keyword id="KW-1185">Reference proteome</keyword>
<keyword id="KW-0677">Repeat</keyword>
<keyword id="KW-0964">Secreted</keyword>
<keyword id="KW-0732">Signal</keyword>
<reference key="1">
    <citation type="journal article" date="2004" name="Genome Res.">
        <title>The status, quality, and expansion of the NIH full-length cDNA project: the Mammalian Gene Collection (MGC).</title>
        <authorList>
            <consortium name="The MGC Project Team"/>
        </authorList>
    </citation>
    <scope>NUCLEOTIDE SEQUENCE [LARGE SCALE MRNA]</scope>
</reference>
<reference key="2">
    <citation type="journal article" date="1998" name="Arch. Biochem. Biophys.">
        <title>Oligomeric structure and tissue distribution of ficolins from mouse, pig and human.</title>
        <authorList>
            <person name="Ohashi T."/>
            <person name="Erickson H.P."/>
        </authorList>
    </citation>
    <scope>NUCLEOTIDE SEQUENCE [MRNA] OF 3-308</scope>
    <source>
        <strain>C57BL/6J</strain>
        <tissue>Bone marrow</tissue>
    </source>
</reference>
<proteinExistence type="evidence at transcript level"/>
<sequence length="314" mass="33984">MALGSAALFVLTLTVHAAGTCPELKVLDLEGYKQLTILQGCPGLPGAAGPKGEAGAKGDRGESGLPGIPGKEGPTGPKGNQGEKGIRGEKGDSGPSQSCATGPRTCKELLTQGHFLTGWYTIYLPDCRPLTVLCDMDTDGGGWTVFQRRLDGSVDFFRDWTSYKRGFGSQLGEFWLGNDNIHALTTQGTSELRVDLSDFEGKHDFAKYSSFQIQGEAEKYKLILGNFLGGGAGDSLTPHNNRLFSTKDQDNDGSTSSCAMGYHGAWWYSQCHTSNLNGLYLRGPHKSYANGVNWKSWRGYNYSCKVSEMKVRLI</sequence>
<protein>
    <recommendedName>
        <fullName>Ficolin-2</fullName>
    </recommendedName>
    <alternativeName>
        <fullName>Collagen/fibrinogen domain-containing protein 2</fullName>
    </alternativeName>
    <alternativeName>
        <fullName>Ficolin-B</fullName>
    </alternativeName>
    <alternativeName>
        <fullName>Ficolin-beta</fullName>
    </alternativeName>
    <alternativeName>
        <fullName>L-ficolin</fullName>
    </alternativeName>
</protein>
<organism>
    <name type="scientific">Mus musculus</name>
    <name type="common">Mouse</name>
    <dbReference type="NCBI Taxonomy" id="10090"/>
    <lineage>
        <taxon>Eukaryota</taxon>
        <taxon>Metazoa</taxon>
        <taxon>Chordata</taxon>
        <taxon>Craniata</taxon>
        <taxon>Vertebrata</taxon>
        <taxon>Euteleostomi</taxon>
        <taxon>Mammalia</taxon>
        <taxon>Eutheria</taxon>
        <taxon>Euarchontoglires</taxon>
        <taxon>Glires</taxon>
        <taxon>Rodentia</taxon>
        <taxon>Myomorpha</taxon>
        <taxon>Muroidea</taxon>
        <taxon>Muridae</taxon>
        <taxon>Murinae</taxon>
        <taxon>Mus</taxon>
        <taxon>Mus</taxon>
    </lineage>
</organism>
<comment type="function">
    <text evidence="2">May function in innate immunity through activation of the lectin complement pathway. Calcium-dependent and GlcNAc-binding lectin (By similarity).</text>
</comment>
<comment type="subunit">
    <text evidence="2">Homotrimer. Interacts with elastin. Interacts with MASP1 and MASP2.</text>
</comment>
<comment type="subcellular location">
    <subcellularLocation>
        <location>Secreted</location>
    </subcellularLocation>
</comment>
<comment type="domain">
    <text evidence="2">The fibrinogen-like domain (FBG) contains calcium-binding sites that may be involved in carbohydrate binding.</text>
</comment>
<comment type="similarity">
    <text evidence="6">Belongs to the ficolin lectin family.</text>
</comment>
<accession>O70497</accession>
<accession>Q3KNL6</accession>
<feature type="signal peptide" evidence="3">
    <location>
        <begin position="1"/>
        <end position="17"/>
    </location>
</feature>
<feature type="chain" id="PRO_0000009140" description="Ficolin-2">
    <location>
        <begin position="18"/>
        <end position="314"/>
    </location>
</feature>
<feature type="domain" description="Collagen-like">
    <location>
        <begin position="40"/>
        <end position="96"/>
    </location>
</feature>
<feature type="domain" description="Fibrinogen C-terminal" evidence="4">
    <location>
        <begin position="97"/>
        <end position="314"/>
    </location>
</feature>
<feature type="region of interest" description="Disordered" evidence="5">
    <location>
        <begin position="49"/>
        <end position="101"/>
    </location>
</feature>
<feature type="binding site" evidence="1">
    <location>
        <position position="250"/>
    </location>
    <ligand>
        <name>Ca(2+)</name>
        <dbReference type="ChEBI" id="CHEBI:29108"/>
    </ligand>
</feature>
<feature type="binding site" evidence="1">
    <location>
        <position position="252"/>
    </location>
    <ligand>
        <name>Ca(2+)</name>
        <dbReference type="ChEBI" id="CHEBI:29108"/>
    </ligand>
</feature>
<feature type="binding site" evidence="1">
    <location>
        <position position="254"/>
    </location>
    <ligand>
        <name>Ca(2+)</name>
        <dbReference type="ChEBI" id="CHEBI:29108"/>
    </ligand>
</feature>
<feature type="binding site" evidence="1">
    <location>
        <position position="256"/>
    </location>
    <ligand>
        <name>Ca(2+)</name>
        <dbReference type="ChEBI" id="CHEBI:29108"/>
    </ligand>
</feature>
<feature type="glycosylation site" description="N-linked (GlcNAc...) asparagine" evidence="3">
    <location>
        <position position="301"/>
    </location>
</feature>
<feature type="disulfide bond" evidence="1">
    <location>
        <begin position="99"/>
        <end position="127"/>
    </location>
</feature>
<feature type="disulfide bond" evidence="1">
    <location>
        <begin position="106"/>
        <end position="134"/>
    </location>
</feature>
<feature type="disulfide bond" evidence="1">
    <location>
        <begin position="258"/>
        <end position="271"/>
    </location>
</feature>
<feature type="sequence conflict" description="In Ref. 2; AAC98781." evidence="6" ref="2">
    <original>L</original>
    <variation>M</variation>
    <location>
        <position position="130"/>
    </location>
</feature>
<gene>
    <name type="primary">Fcn2</name>
    <name type="synonym">Fcnb</name>
</gene>
<name>FCN2_MOUSE</name>
<evidence type="ECO:0000250" key="1">
    <source>
        <dbReference type="UniProtKB" id="O00602"/>
    </source>
</evidence>
<evidence type="ECO:0000250" key="2">
    <source>
        <dbReference type="UniProtKB" id="Q15485"/>
    </source>
</evidence>
<evidence type="ECO:0000255" key="3"/>
<evidence type="ECO:0000255" key="4">
    <source>
        <dbReference type="PROSITE-ProRule" id="PRU00739"/>
    </source>
</evidence>
<evidence type="ECO:0000256" key="5">
    <source>
        <dbReference type="SAM" id="MobiDB-lite"/>
    </source>
</evidence>
<evidence type="ECO:0000305" key="6"/>
<dbReference type="EMBL" id="BC107220">
    <property type="protein sequence ID" value="AAI07221.1"/>
    <property type="molecule type" value="mRNA"/>
</dbReference>
<dbReference type="EMBL" id="BC107221">
    <property type="protein sequence ID" value="AAI07222.1"/>
    <property type="molecule type" value="mRNA"/>
</dbReference>
<dbReference type="EMBL" id="AF063217">
    <property type="protein sequence ID" value="AAC98781.1"/>
    <property type="molecule type" value="mRNA"/>
</dbReference>
<dbReference type="CCDS" id="CCDS15832.1"/>
<dbReference type="RefSeq" id="NP_034320.1">
    <property type="nucleotide sequence ID" value="NM_010190.1"/>
</dbReference>
<dbReference type="SMR" id="O70497"/>
<dbReference type="FunCoup" id="O70497">
    <property type="interactions" value="51"/>
</dbReference>
<dbReference type="STRING" id="10090.ENSMUSP00000028179"/>
<dbReference type="GlyCosmos" id="O70497">
    <property type="glycosylation" value="1 site, No reported glycans"/>
</dbReference>
<dbReference type="GlyGen" id="O70497">
    <property type="glycosylation" value="2 sites"/>
</dbReference>
<dbReference type="CPTAC" id="non-CPTAC-4035"/>
<dbReference type="PaxDb" id="10090-ENSMUSP00000028179"/>
<dbReference type="ProteomicsDB" id="272977"/>
<dbReference type="Antibodypedia" id="602">
    <property type="antibodies" value="397 antibodies from 31 providers"/>
</dbReference>
<dbReference type="Ensembl" id="ENSMUST00000028179.15">
    <property type="protein sequence ID" value="ENSMUSP00000028179.9"/>
    <property type="gene ID" value="ENSMUSG00000026835.16"/>
</dbReference>
<dbReference type="GeneID" id="14134"/>
<dbReference type="KEGG" id="mmu:14134"/>
<dbReference type="UCSC" id="uc008ixv.1">
    <property type="organism name" value="mouse"/>
</dbReference>
<dbReference type="AGR" id="MGI:1341158"/>
<dbReference type="CTD" id="14134"/>
<dbReference type="MGI" id="MGI:1341158">
    <property type="gene designation" value="Fcnb"/>
</dbReference>
<dbReference type="VEuPathDB" id="HostDB:ENSMUSG00000026835"/>
<dbReference type="eggNOG" id="KOG2579">
    <property type="taxonomic scope" value="Eukaryota"/>
</dbReference>
<dbReference type="GeneTree" id="ENSGT00940000157531"/>
<dbReference type="HOGENOM" id="CLU_038628_3_3_1"/>
<dbReference type="InParanoid" id="O70497"/>
<dbReference type="OMA" id="ANECENY"/>
<dbReference type="OrthoDB" id="7735550at2759"/>
<dbReference type="PhylomeDB" id="O70497"/>
<dbReference type="TreeFam" id="TF329953"/>
<dbReference type="Reactome" id="R-MMU-166662">
    <property type="pathway name" value="Lectin pathway of complement activation"/>
</dbReference>
<dbReference type="Reactome" id="R-MMU-166663">
    <property type="pathway name" value="Initial triggering of complement"/>
</dbReference>
<dbReference type="Reactome" id="R-MMU-2855086">
    <property type="pathway name" value="Ficolins bind to repetitive carbohydrate structures on the target cell surface"/>
</dbReference>
<dbReference type="Reactome" id="R-MMU-6798695">
    <property type="pathway name" value="Neutrophil degranulation"/>
</dbReference>
<dbReference type="BioGRID-ORCS" id="14134">
    <property type="hits" value="0 hits in 77 CRISPR screens"/>
</dbReference>
<dbReference type="PRO" id="PR:O70497"/>
<dbReference type="Proteomes" id="UP000000589">
    <property type="component" value="Chromosome 2"/>
</dbReference>
<dbReference type="RNAct" id="O70497">
    <property type="molecule type" value="protein"/>
</dbReference>
<dbReference type="Bgee" id="ENSMUSG00000026835">
    <property type="expression patterns" value="Expressed in granulocyte and 21 other cell types or tissues"/>
</dbReference>
<dbReference type="ExpressionAtlas" id="O70497">
    <property type="expression patterns" value="baseline and differential"/>
</dbReference>
<dbReference type="GO" id="GO:0005581">
    <property type="term" value="C:collagen trimer"/>
    <property type="evidence" value="ECO:0007669"/>
    <property type="project" value="UniProtKB-KW"/>
</dbReference>
<dbReference type="GO" id="GO:0005576">
    <property type="term" value="C:extracellular region"/>
    <property type="evidence" value="ECO:0007669"/>
    <property type="project" value="UniProtKB-SubCell"/>
</dbReference>
<dbReference type="GO" id="GO:0005886">
    <property type="term" value="C:plasma membrane"/>
    <property type="evidence" value="ECO:0007669"/>
    <property type="project" value="Ensembl"/>
</dbReference>
<dbReference type="GO" id="GO:1905370">
    <property type="term" value="C:serine-type endopeptidase complex"/>
    <property type="evidence" value="ECO:0007669"/>
    <property type="project" value="Ensembl"/>
</dbReference>
<dbReference type="GO" id="GO:0030246">
    <property type="term" value="F:carbohydrate binding"/>
    <property type="evidence" value="ECO:0007669"/>
    <property type="project" value="UniProtKB-KW"/>
</dbReference>
<dbReference type="GO" id="GO:0097367">
    <property type="term" value="F:carbohydrate derivative binding"/>
    <property type="evidence" value="ECO:0000314"/>
    <property type="project" value="MGI"/>
</dbReference>
<dbReference type="GO" id="GO:0001664">
    <property type="term" value="F:G protein-coupled receptor binding"/>
    <property type="evidence" value="ECO:0007669"/>
    <property type="project" value="Ensembl"/>
</dbReference>
<dbReference type="GO" id="GO:0046872">
    <property type="term" value="F:metal ion binding"/>
    <property type="evidence" value="ECO:0007669"/>
    <property type="project" value="UniProtKB-KW"/>
</dbReference>
<dbReference type="GO" id="GO:0038187">
    <property type="term" value="F:pattern recognition receptor activity"/>
    <property type="evidence" value="ECO:0007669"/>
    <property type="project" value="Ensembl"/>
</dbReference>
<dbReference type="GO" id="GO:0033691">
    <property type="term" value="F:sialic acid binding"/>
    <property type="evidence" value="ECO:0000314"/>
    <property type="project" value="MGI"/>
</dbReference>
<dbReference type="GO" id="GO:0002752">
    <property type="term" value="P:cell surface pattern recognition receptor signaling pathway"/>
    <property type="evidence" value="ECO:0007669"/>
    <property type="project" value="Ensembl"/>
</dbReference>
<dbReference type="GO" id="GO:0001867">
    <property type="term" value="P:complement activation, lectin pathway"/>
    <property type="evidence" value="ECO:0007669"/>
    <property type="project" value="UniProtKB-KW"/>
</dbReference>
<dbReference type="GO" id="GO:0007186">
    <property type="term" value="P:G protein-coupled receptor signaling pathway"/>
    <property type="evidence" value="ECO:0007669"/>
    <property type="project" value="Ensembl"/>
</dbReference>
<dbReference type="GO" id="GO:0046597">
    <property type="term" value="P:host-mediated suppression of symbiont invasion"/>
    <property type="evidence" value="ECO:0007669"/>
    <property type="project" value="Ensembl"/>
</dbReference>
<dbReference type="GO" id="GO:0032757">
    <property type="term" value="P:positive regulation of interleukin-8 production"/>
    <property type="evidence" value="ECO:0007669"/>
    <property type="project" value="Ensembl"/>
</dbReference>
<dbReference type="GO" id="GO:1903028">
    <property type="term" value="P:positive regulation of opsonization"/>
    <property type="evidence" value="ECO:0007669"/>
    <property type="project" value="Ensembl"/>
</dbReference>
<dbReference type="GO" id="GO:0034394">
    <property type="term" value="P:protein localization to cell surface"/>
    <property type="evidence" value="ECO:0007669"/>
    <property type="project" value="Ensembl"/>
</dbReference>
<dbReference type="GO" id="GO:0006508">
    <property type="term" value="P:proteolysis"/>
    <property type="evidence" value="ECO:0007669"/>
    <property type="project" value="Ensembl"/>
</dbReference>
<dbReference type="GO" id="GO:0043654">
    <property type="term" value="P:recognition of apoptotic cell"/>
    <property type="evidence" value="ECO:0007669"/>
    <property type="project" value="Ensembl"/>
</dbReference>
<dbReference type="CDD" id="cd00087">
    <property type="entry name" value="FReD"/>
    <property type="match status" value="1"/>
</dbReference>
<dbReference type="FunFam" id="3.90.215.10:FF:000001">
    <property type="entry name" value="Tenascin isoform 1"/>
    <property type="match status" value="1"/>
</dbReference>
<dbReference type="Gene3D" id="3.90.215.10">
    <property type="entry name" value="Gamma Fibrinogen, chain A, domain 1"/>
    <property type="match status" value="1"/>
</dbReference>
<dbReference type="InterPro" id="IPR008160">
    <property type="entry name" value="Collagen"/>
</dbReference>
<dbReference type="InterPro" id="IPR036056">
    <property type="entry name" value="Fibrinogen-like_C"/>
</dbReference>
<dbReference type="InterPro" id="IPR014716">
    <property type="entry name" value="Fibrinogen_a/b/g_C_1"/>
</dbReference>
<dbReference type="InterPro" id="IPR002181">
    <property type="entry name" value="Fibrinogen_a/b/g_C_dom"/>
</dbReference>
<dbReference type="InterPro" id="IPR050373">
    <property type="entry name" value="Fibrinogen_C-term_domain"/>
</dbReference>
<dbReference type="InterPro" id="IPR020837">
    <property type="entry name" value="Fibrinogen_CS"/>
</dbReference>
<dbReference type="NCBIfam" id="NF040941">
    <property type="entry name" value="GGGWT_bact"/>
    <property type="match status" value="1"/>
</dbReference>
<dbReference type="PANTHER" id="PTHR19143">
    <property type="entry name" value="FIBRINOGEN/TENASCIN/ANGIOPOEITIN"/>
    <property type="match status" value="1"/>
</dbReference>
<dbReference type="PANTHER" id="PTHR19143:SF433">
    <property type="entry name" value="FICOLIN-2"/>
    <property type="match status" value="1"/>
</dbReference>
<dbReference type="Pfam" id="PF01391">
    <property type="entry name" value="Collagen"/>
    <property type="match status" value="1"/>
</dbReference>
<dbReference type="Pfam" id="PF00147">
    <property type="entry name" value="Fibrinogen_C"/>
    <property type="match status" value="1"/>
</dbReference>
<dbReference type="SMART" id="SM00186">
    <property type="entry name" value="FBG"/>
    <property type="match status" value="1"/>
</dbReference>
<dbReference type="SUPFAM" id="SSF56496">
    <property type="entry name" value="Fibrinogen C-terminal domain-like"/>
    <property type="match status" value="1"/>
</dbReference>
<dbReference type="PROSITE" id="PS00514">
    <property type="entry name" value="FIBRINOGEN_C_1"/>
    <property type="match status" value="1"/>
</dbReference>
<dbReference type="PROSITE" id="PS51406">
    <property type="entry name" value="FIBRINOGEN_C_2"/>
    <property type="match status" value="1"/>
</dbReference>